<comment type="function">
    <text evidence="5">Catalyzes the formation of S-adenosylmethionine from methionine and ATP. The reaction comprises two steps that are both catalyzed by the same enzyme: formation of S-adenosylmethionine (AdoMet) and triphosphate, and subsequent hydrolysis of the triphosphate.</text>
</comment>
<comment type="catalytic activity">
    <reaction evidence="5">
        <text>L-methionine + ATP + H2O = S-adenosyl-L-methionine + phosphate + diphosphate</text>
        <dbReference type="Rhea" id="RHEA:21080"/>
        <dbReference type="ChEBI" id="CHEBI:15377"/>
        <dbReference type="ChEBI" id="CHEBI:30616"/>
        <dbReference type="ChEBI" id="CHEBI:33019"/>
        <dbReference type="ChEBI" id="CHEBI:43474"/>
        <dbReference type="ChEBI" id="CHEBI:57844"/>
        <dbReference type="ChEBI" id="CHEBI:59789"/>
        <dbReference type="EC" id="2.5.1.6"/>
    </reaction>
</comment>
<comment type="cofactor">
    <cofactor evidence="5">
        <name>Mn(2+)</name>
        <dbReference type="ChEBI" id="CHEBI:29035"/>
    </cofactor>
    <cofactor evidence="5">
        <name>Mg(2+)</name>
        <dbReference type="ChEBI" id="CHEBI:18420"/>
    </cofactor>
    <cofactor evidence="5">
        <name>Co(2+)</name>
        <dbReference type="ChEBI" id="CHEBI:48828"/>
    </cofactor>
    <text evidence="3 5">Binds 2 divalent ions per subunit. The metal ions interact primarily with the substrate (By similarity). Can utilize magnesium, manganese or cobalt (in vitro) (By similarity).</text>
</comment>
<comment type="cofactor">
    <cofactor evidence="5">
        <name>K(+)</name>
        <dbReference type="ChEBI" id="CHEBI:29103"/>
    </cofactor>
    <text evidence="3">Binds 1 potassium ion per subunit. The potassium ion interacts primarily with the substrate (By similarity).</text>
</comment>
<comment type="pathway">
    <text evidence="5">Amino-acid biosynthesis; S-adenosyl-L-methionine biosynthesis; S-adenosyl-L-methionine from L-methionine: step 1/1.</text>
</comment>
<comment type="subunit">
    <text evidence="1">Homotetramer.</text>
</comment>
<comment type="subcellular location">
    <subcellularLocation>
        <location evidence="1">Cytoplasm</location>
    </subcellularLocation>
</comment>
<comment type="similarity">
    <text evidence="6">Belongs to the AdoMet synthase family.</text>
</comment>
<protein>
    <recommendedName>
        <fullName>S-adenosylmethionine synthase</fullName>
        <shortName>AdoMet synthase</shortName>
        <ecNumber evidence="5">2.5.1.6</ecNumber>
    </recommendedName>
    <alternativeName>
        <fullName>Methionine adenosyltransferase</fullName>
        <shortName>MAT</shortName>
    </alternativeName>
</protein>
<proteinExistence type="evidence at transcript level"/>
<evidence type="ECO:0000250" key="1"/>
<evidence type="ECO:0000250" key="2">
    <source>
        <dbReference type="UniProtKB" id="P0A817"/>
    </source>
</evidence>
<evidence type="ECO:0000250" key="3">
    <source>
        <dbReference type="UniProtKB" id="P13444"/>
    </source>
</evidence>
<evidence type="ECO:0000250" key="4">
    <source>
        <dbReference type="UniProtKB" id="Q00266"/>
    </source>
</evidence>
<evidence type="ECO:0000250" key="5">
    <source>
        <dbReference type="UniProtKB" id="Q96551"/>
    </source>
</evidence>
<evidence type="ECO:0000305" key="6"/>
<reference key="1">
    <citation type="submission" date="2003-03" db="EMBL/GenBank/DDBJ databases">
        <title>S-adenosylmethionine synthetase gene relates to abortive embryo of Litchi chinensis Guiwei.</title>
        <authorList>
            <person name="Zhang Y.-S."/>
            <person name="Xu X."/>
            <person name="Huang S.-Z."/>
            <person name="Fu J.-R."/>
        </authorList>
    </citation>
    <scope>NUCLEOTIDE SEQUENCE [MRNA]</scope>
    <source>
        <strain>cv. Guiwei</strain>
        <tissue>Embryo</tissue>
    </source>
</reference>
<organism>
    <name type="scientific">Litchi chinensis</name>
    <name type="common">Lychee</name>
    <dbReference type="NCBI Taxonomy" id="151069"/>
    <lineage>
        <taxon>Eukaryota</taxon>
        <taxon>Viridiplantae</taxon>
        <taxon>Streptophyta</taxon>
        <taxon>Embryophyta</taxon>
        <taxon>Tracheophyta</taxon>
        <taxon>Spermatophyta</taxon>
        <taxon>Magnoliopsida</taxon>
        <taxon>eudicotyledons</taxon>
        <taxon>Gunneridae</taxon>
        <taxon>Pentapetalae</taxon>
        <taxon>rosids</taxon>
        <taxon>malvids</taxon>
        <taxon>Sapindales</taxon>
        <taxon>Sapindaceae</taxon>
        <taxon>Litchi</taxon>
    </lineage>
</organism>
<gene>
    <name type="primary">SAMS</name>
</gene>
<keyword id="KW-0067">ATP-binding</keyword>
<keyword id="KW-0170">Cobalt</keyword>
<keyword id="KW-0963">Cytoplasm</keyword>
<keyword id="KW-0460">Magnesium</keyword>
<keyword id="KW-0479">Metal-binding</keyword>
<keyword id="KW-0547">Nucleotide-binding</keyword>
<keyword id="KW-0554">One-carbon metabolism</keyword>
<keyword id="KW-0630">Potassium</keyword>
<keyword id="KW-0808">Transferase</keyword>
<sequence length="393" mass="42905">METFLFTSESVNEGHPDKLCDQVSDAVLDACLAQDPDSKVACETCTRTNMVMVFGEITTKANVDYEQIVRDTCRSIGFTSDDVGLDADNCKVLVNIEQQSPDIAQGVHGHLTKKPEEIGAGDQGHMFGYATDETPELMPLSHVLATKLGARLTEVRKNGTCAWLRPDGKTQVTVEYYNGNGAMVPVRVHTVLISTQHDETVTNDEIAADLKQHVIKPVIPEKYLDEKTIFHLNPSGRFVIGGPHGDAGLTGRKIIIDTYGGWGAHGGGAFSGKDPTKVDRSGAYIVRQAAKSIVASGLARRCIVQVSYAIGVPEPLSVFVDSYGTGKIPDREILKIVKENFDFRPGMISVNLDLKRGGNGRFLKTAAYGHFGREDPDFTWEVVKPLKWDKVQA</sequence>
<feature type="chain" id="PRO_0000363028" description="S-adenosylmethionine synthase">
    <location>
        <begin position="1"/>
        <end position="393"/>
    </location>
</feature>
<feature type="binding site" evidence="3">
    <location>
        <position position="9"/>
    </location>
    <ligand>
        <name>Mg(2+)</name>
        <dbReference type="ChEBI" id="CHEBI:18420"/>
    </ligand>
</feature>
<feature type="binding site" description="in other chain" evidence="4">
    <location>
        <position position="15"/>
    </location>
    <ligand>
        <name>ATP</name>
        <dbReference type="ChEBI" id="CHEBI:30616"/>
        <note>ligand shared between two neighboring subunits</note>
    </ligand>
</feature>
<feature type="binding site" evidence="2">
    <location>
        <position position="43"/>
    </location>
    <ligand>
        <name>K(+)</name>
        <dbReference type="ChEBI" id="CHEBI:29103"/>
    </ligand>
</feature>
<feature type="binding site" description="in other chain" evidence="2">
    <location>
        <position position="56"/>
    </location>
    <ligand>
        <name>L-methionine</name>
        <dbReference type="ChEBI" id="CHEBI:57844"/>
        <note>ligand shared between two neighboring subunits</note>
    </ligand>
</feature>
<feature type="binding site" description="in other chain" evidence="2">
    <location>
        <position position="99"/>
    </location>
    <ligand>
        <name>L-methionine</name>
        <dbReference type="ChEBI" id="CHEBI:57844"/>
        <note>ligand shared between two neighboring subunits</note>
    </ligand>
</feature>
<feature type="binding site" description="in other chain" evidence="4">
    <location>
        <begin position="167"/>
        <end position="169"/>
    </location>
    <ligand>
        <name>ATP</name>
        <dbReference type="ChEBI" id="CHEBI:30616"/>
        <note>ligand shared between two neighboring subunits</note>
    </ligand>
</feature>
<feature type="binding site" description="in other chain" evidence="4">
    <location>
        <begin position="235"/>
        <end position="238"/>
    </location>
    <ligand>
        <name>ATP</name>
        <dbReference type="ChEBI" id="CHEBI:30616"/>
        <note>ligand shared between two neighboring subunits</note>
    </ligand>
</feature>
<feature type="binding site" description="in other chain" evidence="4">
    <location>
        <position position="246"/>
    </location>
    <ligand>
        <name>ATP</name>
        <dbReference type="ChEBI" id="CHEBI:30616"/>
        <note>ligand shared between two neighboring subunits</note>
    </ligand>
</feature>
<feature type="binding site" evidence="2">
    <location>
        <position position="246"/>
    </location>
    <ligand>
        <name>L-methionine</name>
        <dbReference type="ChEBI" id="CHEBI:57844"/>
        <note>ligand shared between two neighboring subunits</note>
    </ligand>
</feature>
<feature type="binding site" description="in other chain" evidence="2">
    <location>
        <begin position="252"/>
        <end position="253"/>
    </location>
    <ligand>
        <name>ATP</name>
        <dbReference type="ChEBI" id="CHEBI:30616"/>
        <note>ligand shared between two neighboring subunits</note>
    </ligand>
</feature>
<feature type="binding site" evidence="2">
    <location>
        <position position="269"/>
    </location>
    <ligand>
        <name>ATP</name>
        <dbReference type="ChEBI" id="CHEBI:30616"/>
        <note>ligand shared between two neighboring subunits</note>
    </ligand>
</feature>
<feature type="binding site" evidence="2">
    <location>
        <position position="273"/>
    </location>
    <ligand>
        <name>ATP</name>
        <dbReference type="ChEBI" id="CHEBI:30616"/>
        <note>ligand shared between two neighboring subunits</note>
    </ligand>
</feature>
<feature type="binding site" evidence="3">
    <location>
        <position position="277"/>
    </location>
    <ligand>
        <name>ATP</name>
        <dbReference type="ChEBI" id="CHEBI:30616"/>
        <note>ligand shared between two neighboring subunits</note>
    </ligand>
</feature>
<feature type="binding site" description="in other chain" evidence="2">
    <location>
        <position position="277"/>
    </location>
    <ligand>
        <name>L-methionine</name>
        <dbReference type="ChEBI" id="CHEBI:57844"/>
        <note>ligand shared between two neighboring subunits</note>
    </ligand>
</feature>
<dbReference type="EC" id="2.5.1.6" evidence="5"/>
<dbReference type="EMBL" id="AY259227">
    <property type="protein sequence ID" value="AAP13994.1"/>
    <property type="molecule type" value="mRNA"/>
</dbReference>
<dbReference type="SMR" id="Q84MM2"/>
<dbReference type="UniPathway" id="UPA00315">
    <property type="reaction ID" value="UER00080"/>
</dbReference>
<dbReference type="GO" id="GO:0005737">
    <property type="term" value="C:cytoplasm"/>
    <property type="evidence" value="ECO:0007669"/>
    <property type="project" value="UniProtKB-SubCell"/>
</dbReference>
<dbReference type="GO" id="GO:0005524">
    <property type="term" value="F:ATP binding"/>
    <property type="evidence" value="ECO:0007669"/>
    <property type="project" value="UniProtKB-KW"/>
</dbReference>
<dbReference type="GO" id="GO:0046872">
    <property type="term" value="F:metal ion binding"/>
    <property type="evidence" value="ECO:0007669"/>
    <property type="project" value="UniProtKB-KW"/>
</dbReference>
<dbReference type="GO" id="GO:0004478">
    <property type="term" value="F:methionine adenosyltransferase activity"/>
    <property type="evidence" value="ECO:0007669"/>
    <property type="project" value="UniProtKB-EC"/>
</dbReference>
<dbReference type="GO" id="GO:0006730">
    <property type="term" value="P:one-carbon metabolic process"/>
    <property type="evidence" value="ECO:0007669"/>
    <property type="project" value="UniProtKB-KW"/>
</dbReference>
<dbReference type="GO" id="GO:0006556">
    <property type="term" value="P:S-adenosylmethionine biosynthetic process"/>
    <property type="evidence" value="ECO:0007669"/>
    <property type="project" value="UniProtKB-UniPathway"/>
</dbReference>
<dbReference type="CDD" id="cd18079">
    <property type="entry name" value="S-AdoMet_synt"/>
    <property type="match status" value="1"/>
</dbReference>
<dbReference type="FunFam" id="3.30.300.10:FF:000001">
    <property type="entry name" value="S-adenosylmethionine synthase"/>
    <property type="match status" value="1"/>
</dbReference>
<dbReference type="FunFam" id="3.30.300.10:FF:000003">
    <property type="entry name" value="S-adenosylmethionine synthase"/>
    <property type="match status" value="1"/>
</dbReference>
<dbReference type="FunFam" id="3.30.300.10:FF:000004">
    <property type="entry name" value="S-adenosylmethionine synthase"/>
    <property type="match status" value="1"/>
</dbReference>
<dbReference type="Gene3D" id="3.30.300.10">
    <property type="match status" value="3"/>
</dbReference>
<dbReference type="HAMAP" id="MF_00086">
    <property type="entry name" value="S_AdoMet_synth1"/>
    <property type="match status" value="1"/>
</dbReference>
<dbReference type="InterPro" id="IPR022631">
    <property type="entry name" value="ADOMET_SYNTHASE_CS"/>
</dbReference>
<dbReference type="InterPro" id="IPR022630">
    <property type="entry name" value="S-AdoMet_synt_C"/>
</dbReference>
<dbReference type="InterPro" id="IPR022629">
    <property type="entry name" value="S-AdoMet_synt_central"/>
</dbReference>
<dbReference type="InterPro" id="IPR022628">
    <property type="entry name" value="S-AdoMet_synt_N"/>
</dbReference>
<dbReference type="InterPro" id="IPR002133">
    <property type="entry name" value="S-AdoMet_synthetase"/>
</dbReference>
<dbReference type="InterPro" id="IPR022636">
    <property type="entry name" value="S-AdoMet_synthetase_sfam"/>
</dbReference>
<dbReference type="NCBIfam" id="TIGR01034">
    <property type="entry name" value="metK"/>
    <property type="match status" value="1"/>
</dbReference>
<dbReference type="PANTHER" id="PTHR11964">
    <property type="entry name" value="S-ADENOSYLMETHIONINE SYNTHETASE"/>
    <property type="match status" value="1"/>
</dbReference>
<dbReference type="Pfam" id="PF02773">
    <property type="entry name" value="S-AdoMet_synt_C"/>
    <property type="match status" value="1"/>
</dbReference>
<dbReference type="Pfam" id="PF02772">
    <property type="entry name" value="S-AdoMet_synt_M"/>
    <property type="match status" value="1"/>
</dbReference>
<dbReference type="Pfam" id="PF00438">
    <property type="entry name" value="S-AdoMet_synt_N"/>
    <property type="match status" value="1"/>
</dbReference>
<dbReference type="PIRSF" id="PIRSF000497">
    <property type="entry name" value="MAT"/>
    <property type="match status" value="1"/>
</dbReference>
<dbReference type="SUPFAM" id="SSF55973">
    <property type="entry name" value="S-adenosylmethionine synthetase"/>
    <property type="match status" value="3"/>
</dbReference>
<dbReference type="PROSITE" id="PS00376">
    <property type="entry name" value="ADOMET_SYNTHASE_1"/>
    <property type="match status" value="1"/>
</dbReference>
<dbReference type="PROSITE" id="PS00377">
    <property type="entry name" value="ADOMET_SYNTHASE_2"/>
    <property type="match status" value="1"/>
</dbReference>
<name>METK_LITCN</name>
<accession>Q84MM2</accession>